<comment type="function">
    <text evidence="1">Golgi-localized UDP-N-acetylglucosamine (UDP-GlcNAc) transporter that transports UDP-N-acetylglucosamine into Golgi lumen.</text>
</comment>
<comment type="subcellular location">
    <subcellularLocation>
        <location evidence="1">Golgi apparatus</location>
        <location evidence="1">cis-Golgi network membrane</location>
        <topology evidence="2">Multi-pass membrane protein</topology>
    </subcellularLocation>
</comment>
<comment type="similarity">
    <text evidence="3">Belongs to the nucleotide-sugar transporter family. SLC35A subfamily.</text>
</comment>
<accession>A1L3G4</accession>
<gene>
    <name type="primary">tmem241</name>
</gene>
<feature type="chain" id="PRO_0000307318" description="UDP-N-acetylglucosamine transporter TMEM241 homolog">
    <location>
        <begin position="1"/>
        <end position="296"/>
    </location>
</feature>
<feature type="transmembrane region" description="Helical" evidence="2">
    <location>
        <begin position="7"/>
        <end position="29"/>
    </location>
</feature>
<feature type="transmembrane region" description="Helical" evidence="2">
    <location>
        <begin position="41"/>
        <end position="61"/>
    </location>
</feature>
<feature type="transmembrane region" description="Helical" evidence="2">
    <location>
        <begin position="67"/>
        <end position="87"/>
    </location>
</feature>
<feature type="transmembrane region" description="Helical" evidence="2">
    <location>
        <begin position="93"/>
        <end position="113"/>
    </location>
</feature>
<feature type="transmembrane region" description="Helical" evidence="2">
    <location>
        <begin position="126"/>
        <end position="146"/>
    </location>
</feature>
<feature type="transmembrane region" description="Helical" evidence="2">
    <location>
        <begin position="147"/>
        <end position="167"/>
    </location>
</feature>
<feature type="transmembrane region" description="Helical" evidence="2">
    <location>
        <begin position="187"/>
        <end position="207"/>
    </location>
</feature>
<feature type="transmembrane region" description="Helical" evidence="2">
    <location>
        <begin position="217"/>
        <end position="237"/>
    </location>
</feature>
<feature type="transmembrane region" description="Helical" evidence="2">
    <location>
        <begin position="248"/>
        <end position="266"/>
    </location>
</feature>
<feature type="transmembrane region" description="Helical" evidence="2">
    <location>
        <begin position="272"/>
        <end position="291"/>
    </location>
</feature>
<protein>
    <recommendedName>
        <fullName>UDP-N-acetylglucosamine transporter TMEM241 homolog</fullName>
    </recommendedName>
    <alternativeName>
        <fullName>Transmembrane protein 241</fullName>
    </alternativeName>
</protein>
<reference key="1">
    <citation type="submission" date="2006-12" db="EMBL/GenBank/DDBJ databases">
        <authorList>
            <consortium name="NIH - Xenopus Gene Collection (XGC) project"/>
        </authorList>
    </citation>
    <scope>NUCLEOTIDE SEQUENCE [LARGE SCALE MRNA]</scope>
    <source>
        <tissue>Kidney</tissue>
    </source>
</reference>
<evidence type="ECO:0000250" key="1">
    <source>
        <dbReference type="UniProtKB" id="Q24JQ0"/>
    </source>
</evidence>
<evidence type="ECO:0000255" key="2"/>
<evidence type="ECO:0000305" key="3"/>
<name>TM241_XENLA</name>
<sequence>MYFRGPAVGLTFCCFYLSSYFTNKYVLSVLKFTYPTLFQGWQTLVGGLILHICWKVGWLEINCNSRSDVVLWLPGCALFVGIIYAGSRALSRLPIPVFFTLHNAAEVVSYGFQRLLFREKCPYSKIFSIFLLLLSAGCLPLHDPQFDADGYFWAVIHLFCVGCYKVFKKSQKSGSLSDLDQQYINYVFSVVLLGLASHPTGDLISALEFPFLYFYRFHSGCCASGILGFLLMLASVKLRSNLSSVQHASWNFVAKVITAGLSLIYFQITLTVPLTLCLLAGGLGEAVLVYAERTGV</sequence>
<keyword id="KW-0333">Golgi apparatus</keyword>
<keyword id="KW-0472">Membrane</keyword>
<keyword id="KW-1185">Reference proteome</keyword>
<keyword id="KW-0812">Transmembrane</keyword>
<keyword id="KW-1133">Transmembrane helix</keyword>
<proteinExistence type="evidence at transcript level"/>
<organism>
    <name type="scientific">Xenopus laevis</name>
    <name type="common">African clawed frog</name>
    <dbReference type="NCBI Taxonomy" id="8355"/>
    <lineage>
        <taxon>Eukaryota</taxon>
        <taxon>Metazoa</taxon>
        <taxon>Chordata</taxon>
        <taxon>Craniata</taxon>
        <taxon>Vertebrata</taxon>
        <taxon>Euteleostomi</taxon>
        <taxon>Amphibia</taxon>
        <taxon>Batrachia</taxon>
        <taxon>Anura</taxon>
        <taxon>Pipoidea</taxon>
        <taxon>Pipidae</taxon>
        <taxon>Xenopodinae</taxon>
        <taxon>Xenopus</taxon>
        <taxon>Xenopus</taxon>
    </lineage>
</organism>
<dbReference type="EMBL" id="BC130081">
    <property type="protein sequence ID" value="AAI30082.1"/>
    <property type="molecule type" value="mRNA"/>
</dbReference>
<dbReference type="RefSeq" id="NP_001091222.1">
    <property type="nucleotide sequence ID" value="NM_001097753.1"/>
</dbReference>
<dbReference type="SMR" id="A1L3G4"/>
<dbReference type="DNASU" id="100036999"/>
<dbReference type="GeneID" id="100036999"/>
<dbReference type="KEGG" id="xla:100036999"/>
<dbReference type="AGR" id="Xenbase:XB-GENE-6255834"/>
<dbReference type="CTD" id="100036999"/>
<dbReference type="Xenbase" id="XB-GENE-6255834">
    <property type="gene designation" value="tmem241.L"/>
</dbReference>
<dbReference type="OMA" id="WAIIHLF"/>
<dbReference type="OrthoDB" id="417037at2759"/>
<dbReference type="Proteomes" id="UP000186698">
    <property type="component" value="Chromosome 6L"/>
</dbReference>
<dbReference type="Bgee" id="100036999">
    <property type="expression patterns" value="Expressed in egg cell and 20 other cell types or tissues"/>
</dbReference>
<dbReference type="GO" id="GO:0005794">
    <property type="term" value="C:Golgi apparatus"/>
    <property type="evidence" value="ECO:0000250"/>
    <property type="project" value="UniProtKB"/>
</dbReference>
<dbReference type="GO" id="GO:0016020">
    <property type="term" value="C:membrane"/>
    <property type="evidence" value="ECO:0007669"/>
    <property type="project" value="UniProtKB-KW"/>
</dbReference>
<dbReference type="GO" id="GO:0005462">
    <property type="term" value="F:UDP-N-acetylglucosamine transmembrane transporter activity"/>
    <property type="evidence" value="ECO:0000250"/>
    <property type="project" value="UniProtKB"/>
</dbReference>
<dbReference type="GO" id="GO:1990569">
    <property type="term" value="P:UDP-N-acetylglucosamine transmembrane transport"/>
    <property type="evidence" value="ECO:0000250"/>
    <property type="project" value="UniProtKB"/>
</dbReference>
<dbReference type="InterPro" id="IPR050186">
    <property type="entry name" value="TPT_transporter"/>
</dbReference>
<dbReference type="PANTHER" id="PTHR11132">
    <property type="entry name" value="SOLUTE CARRIER FAMILY 35"/>
    <property type="match status" value="1"/>
</dbReference>